<accession>B7M887</accession>
<gene>
    <name evidence="1" type="primary">sulA</name>
    <name type="ordered locus">ECIAI1_0999</name>
</gene>
<proteinExistence type="inferred from homology"/>
<dbReference type="EMBL" id="CU928160">
    <property type="protein sequence ID" value="CAQ97863.1"/>
    <property type="molecule type" value="Genomic_DNA"/>
</dbReference>
<dbReference type="RefSeq" id="WP_000288710.1">
    <property type="nucleotide sequence ID" value="NC_011741.1"/>
</dbReference>
<dbReference type="SMR" id="B7M887"/>
<dbReference type="GeneID" id="93776456"/>
<dbReference type="KEGG" id="ecr:ECIAI1_0999"/>
<dbReference type="HOGENOM" id="CLU_118972_1_0_6"/>
<dbReference type="GO" id="GO:0000917">
    <property type="term" value="P:division septum assembly"/>
    <property type="evidence" value="ECO:0007669"/>
    <property type="project" value="UniProtKB-KW"/>
</dbReference>
<dbReference type="GO" id="GO:0006281">
    <property type="term" value="P:DNA repair"/>
    <property type="evidence" value="ECO:0007669"/>
    <property type="project" value="TreeGrafter"/>
</dbReference>
<dbReference type="GO" id="GO:0051782">
    <property type="term" value="P:negative regulation of cell division"/>
    <property type="evidence" value="ECO:0007669"/>
    <property type="project" value="UniProtKB-UniRule"/>
</dbReference>
<dbReference type="GO" id="GO:0009432">
    <property type="term" value="P:SOS response"/>
    <property type="evidence" value="ECO:0007669"/>
    <property type="project" value="UniProtKB-UniRule"/>
</dbReference>
<dbReference type="FunFam" id="3.40.50.300:FF:000417">
    <property type="entry name" value="Cell division inhibitor SulA"/>
    <property type="match status" value="1"/>
</dbReference>
<dbReference type="Gene3D" id="3.40.50.300">
    <property type="entry name" value="P-loop containing nucleotide triphosphate hydrolases"/>
    <property type="match status" value="1"/>
</dbReference>
<dbReference type="HAMAP" id="MF_01179">
    <property type="entry name" value="SulA"/>
    <property type="match status" value="1"/>
</dbReference>
<dbReference type="InterPro" id="IPR004596">
    <property type="entry name" value="Cell_div_suppressor_SulA"/>
</dbReference>
<dbReference type="InterPro" id="IPR027417">
    <property type="entry name" value="P-loop_NTPase"/>
</dbReference>
<dbReference type="InterPro" id="IPR050356">
    <property type="entry name" value="SulA_CellDiv_inhibitor"/>
</dbReference>
<dbReference type="InterPro" id="IPR047696">
    <property type="entry name" value="SulA_enterobact"/>
</dbReference>
<dbReference type="NCBIfam" id="NF007892">
    <property type="entry name" value="PRK10595.1"/>
    <property type="match status" value="1"/>
</dbReference>
<dbReference type="NCBIfam" id="TIGR00623">
    <property type="entry name" value="SOS_SulA_coli"/>
    <property type="match status" value="1"/>
</dbReference>
<dbReference type="PANTHER" id="PTHR35369">
    <property type="entry name" value="BLR3025 PROTEIN-RELATED"/>
    <property type="match status" value="1"/>
</dbReference>
<dbReference type="PANTHER" id="PTHR35369:SF4">
    <property type="entry name" value="CELL DIVISION INHIBITOR SULA"/>
    <property type="match status" value="1"/>
</dbReference>
<dbReference type="Pfam" id="PF03846">
    <property type="entry name" value="SulA"/>
    <property type="match status" value="1"/>
</dbReference>
<dbReference type="PIRSF" id="PIRSF003093">
    <property type="entry name" value="SulA"/>
    <property type="match status" value="1"/>
</dbReference>
<dbReference type="SUPFAM" id="SSF52540">
    <property type="entry name" value="P-loop containing nucleoside triphosphate hydrolases"/>
    <property type="match status" value="1"/>
</dbReference>
<organism>
    <name type="scientific">Escherichia coli O8 (strain IAI1)</name>
    <dbReference type="NCBI Taxonomy" id="585034"/>
    <lineage>
        <taxon>Bacteria</taxon>
        <taxon>Pseudomonadati</taxon>
        <taxon>Pseudomonadota</taxon>
        <taxon>Gammaproteobacteria</taxon>
        <taxon>Enterobacterales</taxon>
        <taxon>Enterobacteriaceae</taxon>
        <taxon>Escherichia</taxon>
    </lineage>
</organism>
<feature type="chain" id="PRO_1000138158" description="Cell division inhibitor SulA">
    <location>
        <begin position="1"/>
        <end position="169"/>
    </location>
</feature>
<feature type="region of interest" description="FtsZ binding" evidence="1">
    <location>
        <begin position="106"/>
        <end position="112"/>
    </location>
</feature>
<feature type="region of interest" description="Lon protease binding" evidence="1">
    <location>
        <begin position="162"/>
        <end position="169"/>
    </location>
</feature>
<feature type="site" description="Essential for degradation by Lon protease" evidence="1">
    <location>
        <position position="169"/>
    </location>
</feature>
<protein>
    <recommendedName>
        <fullName evidence="1">Cell division inhibitor SulA</fullName>
    </recommendedName>
</protein>
<evidence type="ECO:0000255" key="1">
    <source>
        <dbReference type="HAMAP-Rule" id="MF_01179"/>
    </source>
</evidence>
<keyword id="KW-0131">Cell cycle</keyword>
<keyword id="KW-0132">Cell division</keyword>
<keyword id="KW-0227">DNA damage</keyword>
<keyword id="KW-0717">Septation</keyword>
<keyword id="KW-0742">SOS response</keyword>
<comment type="function">
    <text evidence="1">Component of the SOS system and an inhibitor of cell division. Accumulation of SulA causes rapid cessation of cell division and the appearance of long, non-septate filaments. In the presence of GTP, binds a polymerization-competent form of FtsZ in a 1:1 ratio, thus inhibiting FtsZ polymerization and therefore preventing it from participating in the assembly of the Z ring. This mechanism prevents the premature segregation of damaged DNA to daughter cells during cell division.</text>
</comment>
<comment type="subunit">
    <text evidence="1">Interacts with FtsZ.</text>
</comment>
<comment type="induction">
    <text evidence="1">By DNA damage, as part of the SOS response.</text>
</comment>
<comment type="PTM">
    <text evidence="1">Is rapidly cleaved and degraded by the Lon protease once DNA damage is repaired.</text>
</comment>
<comment type="similarity">
    <text evidence="1">Belongs to the SulA family.</text>
</comment>
<sequence length="169" mass="18801">MYTSGYAHRSSSFSSAASKIARVSTENTTAGLISEVVYREDQPMMTQLLLLPLLQQLGQQSRWQLWLTPQQKLSREWVQASGLPLTKVMQISQLSPCHTVESMVRALRTGNYSVVIGWLADDLTEEEHAELVDAANEGNAMGFIMRPVSASSHATRQLSGLKIHSNLYH</sequence>
<reference key="1">
    <citation type="journal article" date="2009" name="PLoS Genet.">
        <title>Organised genome dynamics in the Escherichia coli species results in highly diverse adaptive paths.</title>
        <authorList>
            <person name="Touchon M."/>
            <person name="Hoede C."/>
            <person name="Tenaillon O."/>
            <person name="Barbe V."/>
            <person name="Baeriswyl S."/>
            <person name="Bidet P."/>
            <person name="Bingen E."/>
            <person name="Bonacorsi S."/>
            <person name="Bouchier C."/>
            <person name="Bouvet O."/>
            <person name="Calteau A."/>
            <person name="Chiapello H."/>
            <person name="Clermont O."/>
            <person name="Cruveiller S."/>
            <person name="Danchin A."/>
            <person name="Diard M."/>
            <person name="Dossat C."/>
            <person name="Karoui M.E."/>
            <person name="Frapy E."/>
            <person name="Garry L."/>
            <person name="Ghigo J.M."/>
            <person name="Gilles A.M."/>
            <person name="Johnson J."/>
            <person name="Le Bouguenec C."/>
            <person name="Lescat M."/>
            <person name="Mangenot S."/>
            <person name="Martinez-Jehanne V."/>
            <person name="Matic I."/>
            <person name="Nassif X."/>
            <person name="Oztas S."/>
            <person name="Petit M.A."/>
            <person name="Pichon C."/>
            <person name="Rouy Z."/>
            <person name="Ruf C.S."/>
            <person name="Schneider D."/>
            <person name="Tourret J."/>
            <person name="Vacherie B."/>
            <person name="Vallenet D."/>
            <person name="Medigue C."/>
            <person name="Rocha E.P.C."/>
            <person name="Denamur E."/>
        </authorList>
    </citation>
    <scope>NUCLEOTIDE SEQUENCE [LARGE SCALE GENOMIC DNA]</scope>
    <source>
        <strain>IAI1</strain>
    </source>
</reference>
<name>SULA_ECO8A</name>